<reference key="1">
    <citation type="journal article" date="2004" name="Nature">
        <title>Genome sequence of the Brown Norway rat yields insights into mammalian evolution.</title>
        <authorList>
            <person name="Gibbs R.A."/>
            <person name="Weinstock G.M."/>
            <person name="Metzker M.L."/>
            <person name="Muzny D.M."/>
            <person name="Sodergren E.J."/>
            <person name="Scherer S."/>
            <person name="Scott G."/>
            <person name="Steffen D."/>
            <person name="Worley K.C."/>
            <person name="Burch P.E."/>
            <person name="Okwuonu G."/>
            <person name="Hines S."/>
            <person name="Lewis L."/>
            <person name="Deramo C."/>
            <person name="Delgado O."/>
            <person name="Dugan-Rocha S."/>
            <person name="Miner G."/>
            <person name="Morgan M."/>
            <person name="Hawes A."/>
            <person name="Gill R."/>
            <person name="Holt R.A."/>
            <person name="Adams M.D."/>
            <person name="Amanatides P.G."/>
            <person name="Baden-Tillson H."/>
            <person name="Barnstead M."/>
            <person name="Chin S."/>
            <person name="Evans C.A."/>
            <person name="Ferriera S."/>
            <person name="Fosler C."/>
            <person name="Glodek A."/>
            <person name="Gu Z."/>
            <person name="Jennings D."/>
            <person name="Kraft C.L."/>
            <person name="Nguyen T."/>
            <person name="Pfannkoch C.M."/>
            <person name="Sitter C."/>
            <person name="Sutton G.G."/>
            <person name="Venter J.C."/>
            <person name="Woodage T."/>
            <person name="Smith D."/>
            <person name="Lee H.-M."/>
            <person name="Gustafson E."/>
            <person name="Cahill P."/>
            <person name="Kana A."/>
            <person name="Doucette-Stamm L."/>
            <person name="Weinstock K."/>
            <person name="Fechtel K."/>
            <person name="Weiss R.B."/>
            <person name="Dunn D.M."/>
            <person name="Green E.D."/>
            <person name="Blakesley R.W."/>
            <person name="Bouffard G.G."/>
            <person name="De Jong P.J."/>
            <person name="Osoegawa K."/>
            <person name="Zhu B."/>
            <person name="Marra M."/>
            <person name="Schein J."/>
            <person name="Bosdet I."/>
            <person name="Fjell C."/>
            <person name="Jones S."/>
            <person name="Krzywinski M."/>
            <person name="Mathewson C."/>
            <person name="Siddiqui A."/>
            <person name="Wye N."/>
            <person name="McPherson J."/>
            <person name="Zhao S."/>
            <person name="Fraser C.M."/>
            <person name="Shetty J."/>
            <person name="Shatsman S."/>
            <person name="Geer K."/>
            <person name="Chen Y."/>
            <person name="Abramzon S."/>
            <person name="Nierman W.C."/>
            <person name="Havlak P.H."/>
            <person name="Chen R."/>
            <person name="Durbin K.J."/>
            <person name="Egan A."/>
            <person name="Ren Y."/>
            <person name="Song X.-Z."/>
            <person name="Li B."/>
            <person name="Liu Y."/>
            <person name="Qin X."/>
            <person name="Cawley S."/>
            <person name="Cooney A.J."/>
            <person name="D'Souza L.M."/>
            <person name="Martin K."/>
            <person name="Wu J.Q."/>
            <person name="Gonzalez-Garay M.L."/>
            <person name="Jackson A.R."/>
            <person name="Kalafus K.J."/>
            <person name="McLeod M.P."/>
            <person name="Milosavljevic A."/>
            <person name="Virk D."/>
            <person name="Volkov A."/>
            <person name="Wheeler D.A."/>
            <person name="Zhang Z."/>
            <person name="Bailey J.A."/>
            <person name="Eichler E.E."/>
            <person name="Tuzun E."/>
            <person name="Birney E."/>
            <person name="Mongin E."/>
            <person name="Ureta-Vidal A."/>
            <person name="Woodwark C."/>
            <person name="Zdobnov E."/>
            <person name="Bork P."/>
            <person name="Suyama M."/>
            <person name="Torrents D."/>
            <person name="Alexandersson M."/>
            <person name="Trask B.J."/>
            <person name="Young J.M."/>
            <person name="Huang H."/>
            <person name="Wang H."/>
            <person name="Xing H."/>
            <person name="Daniels S."/>
            <person name="Gietzen D."/>
            <person name="Schmidt J."/>
            <person name="Stevens K."/>
            <person name="Vitt U."/>
            <person name="Wingrove J."/>
            <person name="Camara F."/>
            <person name="Mar Alba M."/>
            <person name="Abril J.F."/>
            <person name="Guigo R."/>
            <person name="Smit A."/>
            <person name="Dubchak I."/>
            <person name="Rubin E.M."/>
            <person name="Couronne O."/>
            <person name="Poliakov A."/>
            <person name="Huebner N."/>
            <person name="Ganten D."/>
            <person name="Goesele C."/>
            <person name="Hummel O."/>
            <person name="Kreitler T."/>
            <person name="Lee Y.-A."/>
            <person name="Monti J."/>
            <person name="Schulz H."/>
            <person name="Zimdahl H."/>
            <person name="Himmelbauer H."/>
            <person name="Lehrach H."/>
            <person name="Jacob H.J."/>
            <person name="Bromberg S."/>
            <person name="Gullings-Handley J."/>
            <person name="Jensen-Seaman M.I."/>
            <person name="Kwitek A.E."/>
            <person name="Lazar J."/>
            <person name="Pasko D."/>
            <person name="Tonellato P.J."/>
            <person name="Twigger S."/>
            <person name="Ponting C.P."/>
            <person name="Duarte J.M."/>
            <person name="Rice S."/>
            <person name="Goodstadt L."/>
            <person name="Beatson S.A."/>
            <person name="Emes R.D."/>
            <person name="Winter E.E."/>
            <person name="Webber C."/>
            <person name="Brandt P."/>
            <person name="Nyakatura G."/>
            <person name="Adetobi M."/>
            <person name="Chiaromonte F."/>
            <person name="Elnitski L."/>
            <person name="Eswara P."/>
            <person name="Hardison R.C."/>
            <person name="Hou M."/>
            <person name="Kolbe D."/>
            <person name="Makova K."/>
            <person name="Miller W."/>
            <person name="Nekrutenko A."/>
            <person name="Riemer C."/>
            <person name="Schwartz S."/>
            <person name="Taylor J."/>
            <person name="Yang S."/>
            <person name="Zhang Y."/>
            <person name="Lindpaintner K."/>
            <person name="Andrews T.D."/>
            <person name="Caccamo M."/>
            <person name="Clamp M."/>
            <person name="Clarke L."/>
            <person name="Curwen V."/>
            <person name="Durbin R.M."/>
            <person name="Eyras E."/>
            <person name="Searle S.M."/>
            <person name="Cooper G.M."/>
            <person name="Batzoglou S."/>
            <person name="Brudno M."/>
            <person name="Sidow A."/>
            <person name="Stone E.A."/>
            <person name="Payseur B.A."/>
            <person name="Bourque G."/>
            <person name="Lopez-Otin C."/>
            <person name="Puente X.S."/>
            <person name="Chakrabarti K."/>
            <person name="Chatterji S."/>
            <person name="Dewey C."/>
            <person name="Pachter L."/>
            <person name="Bray N."/>
            <person name="Yap V.B."/>
            <person name="Caspi A."/>
            <person name="Tesler G."/>
            <person name="Pevzner P.A."/>
            <person name="Haussler D."/>
            <person name="Roskin K.M."/>
            <person name="Baertsch R."/>
            <person name="Clawson H."/>
            <person name="Furey T.S."/>
            <person name="Hinrichs A.S."/>
            <person name="Karolchik D."/>
            <person name="Kent W.J."/>
            <person name="Rosenbloom K.R."/>
            <person name="Trumbower H."/>
            <person name="Weirauch M."/>
            <person name="Cooper D.N."/>
            <person name="Stenson P.D."/>
            <person name="Ma B."/>
            <person name="Brent M."/>
            <person name="Arumugam M."/>
            <person name="Shteynberg D."/>
            <person name="Copley R.R."/>
            <person name="Taylor M.S."/>
            <person name="Riethman H."/>
            <person name="Mudunuri U."/>
            <person name="Peterson J."/>
            <person name="Guyer M."/>
            <person name="Felsenfeld A."/>
            <person name="Old S."/>
            <person name="Mockrin S."/>
            <person name="Collins F.S."/>
        </authorList>
    </citation>
    <scope>NUCLEOTIDE SEQUENCE [LARGE SCALE GENOMIC DNA]</scope>
    <source>
        <strain>Brown Norway</strain>
    </source>
</reference>
<reference key="2">
    <citation type="journal article" date="2004" name="Genome Res.">
        <title>The status, quality, and expansion of the NIH full-length cDNA project: the Mammalian Gene Collection (MGC).</title>
        <authorList>
            <consortium name="The MGC Project Team"/>
        </authorList>
    </citation>
    <scope>NUCLEOTIDE SEQUENCE [LARGE SCALE MRNA]</scope>
    <source>
        <tissue>Lung</tissue>
    </source>
</reference>
<accession>B4F785</accession>
<keyword id="KW-0966">Cell projection</keyword>
<keyword id="KW-1015">Disulfide bond</keyword>
<keyword id="KW-0245">EGF-like domain</keyword>
<keyword id="KW-0272">Extracellular matrix</keyword>
<keyword id="KW-0325">Glycoprotein</keyword>
<keyword id="KW-0357">Heparan sulfate</keyword>
<keyword id="KW-0654">Proteoglycan</keyword>
<keyword id="KW-1185">Reference proteome</keyword>
<keyword id="KW-0677">Repeat</keyword>
<keyword id="KW-0964">Secreted</keyword>
<keyword id="KW-0732">Signal</keyword>
<keyword id="KW-0770">Synapse</keyword>
<gene>
    <name type="primary">Egflam</name>
</gene>
<proteinExistence type="evidence at transcript level"/>
<evidence type="ECO:0000250" key="1"/>
<evidence type="ECO:0000250" key="2">
    <source>
        <dbReference type="UniProtKB" id="Q4VBE4"/>
    </source>
</evidence>
<evidence type="ECO:0000255" key="3"/>
<evidence type="ECO:0000255" key="4">
    <source>
        <dbReference type="PROSITE-ProRule" id="PRU00076"/>
    </source>
</evidence>
<evidence type="ECO:0000255" key="5">
    <source>
        <dbReference type="PROSITE-ProRule" id="PRU00122"/>
    </source>
</evidence>
<evidence type="ECO:0000255" key="6">
    <source>
        <dbReference type="PROSITE-ProRule" id="PRU00316"/>
    </source>
</evidence>
<evidence type="ECO:0000256" key="7">
    <source>
        <dbReference type="SAM" id="MobiDB-lite"/>
    </source>
</evidence>
<protein>
    <recommendedName>
        <fullName>Pikachurin</fullName>
    </recommendedName>
    <alternativeName>
        <fullName>EGF-like, fibronectin type-III and laminin G-like domain-containing protein</fullName>
    </alternativeName>
</protein>
<comment type="function">
    <text evidence="2">Involved in both the retinal photoreceptor ribbon synapse formation and physiological functions of visual perception. Plays a key role in the synaptic organization of photoreceptors by mediating transsynaptic interaction between alpha-dystroglycan and GPR179 on the postsynaptic membrane. Necessary for proper bipolar dendritic tip apposition to the photoreceptor ribbon synapse. Promotes matrix assembly and cell adhesiveness.</text>
</comment>
<comment type="subunit">
    <text evidence="2">Interacts with DAG1 alpha-dystroglycan. Interacts with GPR158 and GPR179; transsynaptic interaction is required for synaptic organization of photoreceptor cells.</text>
</comment>
<comment type="subcellular location">
    <subcellularLocation>
        <location evidence="2">Secreted</location>
        <location evidence="2">Extracellular space</location>
        <location evidence="2">Extracellular matrix</location>
    </subcellularLocation>
    <subcellularLocation>
        <location evidence="2">Synaptic cleft</location>
    </subcellularLocation>
    <subcellularLocation>
        <location evidence="2">Presynaptic active zone</location>
    </subcellularLocation>
    <text evidence="2">Detected in the synaptic cleft of the ribbon synapse around the postsynaptic terminals of bipolar cells. Colocalizes with BSN, CTBP2 and DAG1 in photoreceptor synaptic terminals.</text>
</comment>
<comment type="PTM">
    <text evidence="2">O-glycosylated; contains chondroitin sulfate and heparan sulfate.</text>
</comment>
<feature type="signal peptide" evidence="3">
    <location>
        <begin position="1"/>
        <end position="24"/>
    </location>
</feature>
<feature type="chain" id="PRO_0000361571" description="Pikachurin">
    <location>
        <begin position="25"/>
        <end position="1005"/>
    </location>
</feature>
<feature type="domain" description="Fibronectin type-III 1" evidence="6">
    <location>
        <begin position="37"/>
        <end position="136"/>
    </location>
</feature>
<feature type="domain" description="Fibronectin type-III 2" evidence="6">
    <location>
        <begin position="144"/>
        <end position="239"/>
    </location>
</feature>
<feature type="domain" description="EGF-like 1" evidence="4">
    <location>
        <begin position="339"/>
        <end position="377"/>
    </location>
</feature>
<feature type="domain" description="Laminin G-like 1" evidence="5">
    <location>
        <begin position="382"/>
        <end position="560"/>
    </location>
</feature>
<feature type="domain" description="EGF-like 2" evidence="4">
    <location>
        <begin position="561"/>
        <end position="598"/>
    </location>
</feature>
<feature type="domain" description="Laminin G-like 2" evidence="5">
    <location>
        <begin position="605"/>
        <end position="784"/>
    </location>
</feature>
<feature type="domain" description="EGF-like 3" evidence="4">
    <location>
        <begin position="780"/>
        <end position="816"/>
    </location>
</feature>
<feature type="domain" description="Laminin G-like 3" evidence="5">
    <location>
        <begin position="823"/>
        <end position="1002"/>
    </location>
</feature>
<feature type="region of interest" description="Disordered" evidence="7">
    <location>
        <begin position="281"/>
        <end position="328"/>
    </location>
</feature>
<feature type="compositionally biased region" description="Polar residues" evidence="7">
    <location>
        <begin position="305"/>
        <end position="314"/>
    </location>
</feature>
<feature type="glycosylation site" description="N-linked (GlcNAc...) asparagine" evidence="3">
    <location>
        <position position="47"/>
    </location>
</feature>
<feature type="disulfide bond" evidence="1">
    <location>
        <begin position="343"/>
        <end position="354"/>
    </location>
</feature>
<feature type="disulfide bond" evidence="1">
    <location>
        <begin position="348"/>
        <end position="365"/>
    </location>
</feature>
<feature type="disulfide bond" evidence="1">
    <location>
        <begin position="367"/>
        <end position="376"/>
    </location>
</feature>
<feature type="disulfide bond" evidence="1">
    <location>
        <begin position="530"/>
        <end position="560"/>
    </location>
</feature>
<feature type="disulfide bond" evidence="1">
    <location>
        <begin position="565"/>
        <end position="576"/>
    </location>
</feature>
<feature type="disulfide bond" evidence="1">
    <location>
        <begin position="570"/>
        <end position="586"/>
    </location>
</feature>
<feature type="disulfide bond" evidence="1">
    <location>
        <begin position="588"/>
        <end position="597"/>
    </location>
</feature>
<feature type="disulfide bond" evidence="1">
    <location>
        <begin position="784"/>
        <end position="795"/>
    </location>
</feature>
<feature type="disulfide bond" evidence="1">
    <location>
        <begin position="789"/>
        <end position="804"/>
    </location>
</feature>
<feature type="disulfide bond" evidence="1">
    <location>
        <begin position="806"/>
        <end position="815"/>
    </location>
</feature>
<feature type="disulfide bond" evidence="1">
    <location>
        <begin position="975"/>
        <end position="1002"/>
    </location>
</feature>
<sequence>MDLISTFLLHFLLLACSLPPGAVSLRTALRKSGKVGPPLDIKLGALNCTAFSIQWKTPKRSGSSIVGYTVFYSELGSDKSLREQSHNVPVGQDTLITEEVIGDLKPGTEYRVSIAAYSQTGKGRLSFPRHVTTLSQDSCLPPEAPHQPHVLVVSDSEVALSWRPGENEGSAPIQSYSVEFIRPDFDKSWTIIQERLQMDSMVIKGLDPDTNYQFAVRAMNAYGFSLRSQPSNTIRTLGPGEAGSGRYGPGYITDTGVSEDDDASEDELDLDVSFEEVKPLPATKVGNKKSKKTSVSNSEMDSRLAQPTSASLPETTVAVPPTPAQRKGKNSVAVMSRLFDMSCDETLCSADSFCVNDYAWGGSRCHCNLGKGGEACSEDIFIQYPQFFGHSYVTFEPLKNSYQAFQITLEFRAEAEDGLLLYCGESEHGRGDFMSLALIRRSLHFRFNCGTGMAIIISETKIKLGAWHSVTLYRDGLNGLLQLNNGTPVTGQSQGQYSKITFRTPLYLGGAPSAYWLVRATGTNRGFQGCVQSLAVNGKKIDMRPWPLGKALNGADVGECSSGICDEASCINGGTCAAIKADSYICLCPLGFRGRHCEDAFTLTIPQFRESLRSYAATPWPLEPQHYLSFTEFEITFRPDSGDGVLLYSYDTSSKDFLSIIMAAGHVEFRFDCGSGTGVLRSEDTLTLGQWHDLRVSRTAKNGILQVDKQKVVEGMAEGGFTQIKCNTDIFIGGVPNYDDVKKNSGILHPFSGSIQKIILNDRTIHVRHDFTSGVNVENAAHPCVGAPCAHGGSCRPRKEGYECDCPLGFEGLNCQKAITEAIEIPQFIGRSYLTYDNPNILKRVSGSRSNAFMRFKTTAKDGLLLWRGDSPMRPNSDFISLGLRDGALVFSYNLGSGVASIMVNGSFSDGRWHRVKAVRDGQSGKITVDDYGARTGKSPGMMRQLNINGALYVGGMKEIALRTNRQYMRGLVGCISHFTLSTDYHISLVEDAVDGKNINTCGAK</sequence>
<organism>
    <name type="scientific">Rattus norvegicus</name>
    <name type="common">Rat</name>
    <dbReference type="NCBI Taxonomy" id="10116"/>
    <lineage>
        <taxon>Eukaryota</taxon>
        <taxon>Metazoa</taxon>
        <taxon>Chordata</taxon>
        <taxon>Craniata</taxon>
        <taxon>Vertebrata</taxon>
        <taxon>Euteleostomi</taxon>
        <taxon>Mammalia</taxon>
        <taxon>Eutheria</taxon>
        <taxon>Euarchontoglires</taxon>
        <taxon>Glires</taxon>
        <taxon>Rodentia</taxon>
        <taxon>Myomorpha</taxon>
        <taxon>Muroidea</taxon>
        <taxon>Muridae</taxon>
        <taxon>Murinae</taxon>
        <taxon>Rattus</taxon>
    </lineage>
</organism>
<dbReference type="EMBL" id="AABR03012233">
    <property type="status" value="NOT_ANNOTATED_CDS"/>
    <property type="molecule type" value="Genomic_DNA"/>
</dbReference>
<dbReference type="EMBL" id="AABR03012676">
    <property type="status" value="NOT_ANNOTATED_CDS"/>
    <property type="molecule type" value="Genomic_DNA"/>
</dbReference>
<dbReference type="EMBL" id="AABR03016535">
    <property type="status" value="NOT_ANNOTATED_CDS"/>
    <property type="molecule type" value="Genomic_DNA"/>
</dbReference>
<dbReference type="EMBL" id="BC168173">
    <property type="protein sequence ID" value="AAI68173.1"/>
    <property type="molecule type" value="mRNA"/>
</dbReference>
<dbReference type="RefSeq" id="NP_001102408.2">
    <property type="nucleotide sequence ID" value="NM_001108938.2"/>
</dbReference>
<dbReference type="SMR" id="B4F785"/>
<dbReference type="FunCoup" id="B4F785">
    <property type="interactions" value="935"/>
</dbReference>
<dbReference type="STRING" id="10116.ENSRNOP00000016722"/>
<dbReference type="GlyCosmos" id="B4F785">
    <property type="glycosylation" value="1 site, No reported glycans"/>
</dbReference>
<dbReference type="GlyGen" id="B4F785">
    <property type="glycosylation" value="2 sites"/>
</dbReference>
<dbReference type="PhosphoSitePlus" id="B4F785"/>
<dbReference type="PaxDb" id="10116-ENSRNOP00000016722"/>
<dbReference type="GeneID" id="365691"/>
<dbReference type="KEGG" id="rno:365691"/>
<dbReference type="UCSC" id="RGD:1306592">
    <property type="organism name" value="rat"/>
</dbReference>
<dbReference type="AGR" id="RGD:1306592"/>
<dbReference type="CTD" id="133584"/>
<dbReference type="RGD" id="1306592">
    <property type="gene designation" value="Egflam"/>
</dbReference>
<dbReference type="eggNOG" id="KOG0613">
    <property type="taxonomic scope" value="Eukaryota"/>
</dbReference>
<dbReference type="eggNOG" id="KOG3509">
    <property type="taxonomic scope" value="Eukaryota"/>
</dbReference>
<dbReference type="InParanoid" id="B4F785"/>
<dbReference type="OrthoDB" id="10014052at2759"/>
<dbReference type="PRO" id="PR:B4F785"/>
<dbReference type="Proteomes" id="UP000002494">
    <property type="component" value="Unplaced"/>
</dbReference>
<dbReference type="GO" id="GO:0005604">
    <property type="term" value="C:basement membrane"/>
    <property type="evidence" value="ECO:0000266"/>
    <property type="project" value="RGD"/>
</dbReference>
<dbReference type="GO" id="GO:0042995">
    <property type="term" value="C:cell projection"/>
    <property type="evidence" value="ECO:0007669"/>
    <property type="project" value="UniProtKB-KW"/>
</dbReference>
<dbReference type="GO" id="GO:0009986">
    <property type="term" value="C:cell surface"/>
    <property type="evidence" value="ECO:0000266"/>
    <property type="project" value="RGD"/>
</dbReference>
<dbReference type="GO" id="GO:0031012">
    <property type="term" value="C:extracellular matrix"/>
    <property type="evidence" value="ECO:0000266"/>
    <property type="project" value="RGD"/>
</dbReference>
<dbReference type="GO" id="GO:0005614">
    <property type="term" value="C:interstitial matrix"/>
    <property type="evidence" value="ECO:0000266"/>
    <property type="project" value="RGD"/>
</dbReference>
<dbReference type="GO" id="GO:0098684">
    <property type="term" value="C:photoreceptor ribbon synapse"/>
    <property type="evidence" value="ECO:0000266"/>
    <property type="project" value="RGD"/>
</dbReference>
<dbReference type="GO" id="GO:0048786">
    <property type="term" value="C:presynaptic active zone"/>
    <property type="evidence" value="ECO:0007669"/>
    <property type="project" value="UniProtKB-SubCell"/>
</dbReference>
<dbReference type="GO" id="GO:0043083">
    <property type="term" value="C:synaptic cleft"/>
    <property type="evidence" value="ECO:0007669"/>
    <property type="project" value="UniProtKB-SubCell"/>
</dbReference>
<dbReference type="GO" id="GO:0005509">
    <property type="term" value="F:calcium ion binding"/>
    <property type="evidence" value="ECO:0007669"/>
    <property type="project" value="InterPro"/>
</dbReference>
<dbReference type="GO" id="GO:0005539">
    <property type="term" value="F:glycosaminoglycan binding"/>
    <property type="evidence" value="ECO:0000266"/>
    <property type="project" value="RGD"/>
</dbReference>
<dbReference type="GO" id="GO:0030198">
    <property type="term" value="P:extracellular matrix organization"/>
    <property type="evidence" value="ECO:0000266"/>
    <property type="project" value="RGD"/>
</dbReference>
<dbReference type="GO" id="GO:0010811">
    <property type="term" value="P:positive regulation of cell-substrate adhesion"/>
    <property type="evidence" value="ECO:0000266"/>
    <property type="project" value="RGD"/>
</dbReference>
<dbReference type="CDD" id="cd00054">
    <property type="entry name" value="EGF_CA"/>
    <property type="match status" value="2"/>
</dbReference>
<dbReference type="CDD" id="cd00063">
    <property type="entry name" value="FN3"/>
    <property type="match status" value="2"/>
</dbReference>
<dbReference type="CDD" id="cd00110">
    <property type="entry name" value="LamG"/>
    <property type="match status" value="3"/>
</dbReference>
<dbReference type="FunFam" id="2.60.40.10:FF:001294">
    <property type="entry name" value="EGF like, fibronectin type III and laminin G domains"/>
    <property type="match status" value="1"/>
</dbReference>
<dbReference type="FunFam" id="2.60.120.200:FF:000032">
    <property type="entry name" value="pikachurin isoform X1"/>
    <property type="match status" value="1"/>
</dbReference>
<dbReference type="FunFam" id="2.60.120.200:FF:000033">
    <property type="entry name" value="pikachurin isoform X1"/>
    <property type="match status" value="1"/>
</dbReference>
<dbReference type="FunFam" id="2.60.120.200:FF:000034">
    <property type="entry name" value="pikachurin isoform X1"/>
    <property type="match status" value="1"/>
</dbReference>
<dbReference type="FunFam" id="2.60.40.10:FF:000793">
    <property type="entry name" value="pikachurin isoform X1"/>
    <property type="match status" value="1"/>
</dbReference>
<dbReference type="FunFam" id="2.10.25.10:FF:000220">
    <property type="entry name" value="pikachurin isoform X3"/>
    <property type="match status" value="1"/>
</dbReference>
<dbReference type="FunFam" id="2.10.25.10:FF:000248">
    <property type="entry name" value="pikachurin isoform X3"/>
    <property type="match status" value="1"/>
</dbReference>
<dbReference type="Gene3D" id="2.60.120.200">
    <property type="match status" value="3"/>
</dbReference>
<dbReference type="Gene3D" id="2.60.40.10">
    <property type="entry name" value="Immunoglobulins"/>
    <property type="match status" value="2"/>
</dbReference>
<dbReference type="Gene3D" id="2.10.25.10">
    <property type="entry name" value="Laminin"/>
    <property type="match status" value="2"/>
</dbReference>
<dbReference type="InterPro" id="IPR013320">
    <property type="entry name" value="ConA-like_dom_sf"/>
</dbReference>
<dbReference type="InterPro" id="IPR001881">
    <property type="entry name" value="EGF-like_Ca-bd_dom"/>
</dbReference>
<dbReference type="InterPro" id="IPR000742">
    <property type="entry name" value="EGF-like_dom"/>
</dbReference>
<dbReference type="InterPro" id="IPR056943">
    <property type="entry name" value="EGF_Pikachurin"/>
</dbReference>
<dbReference type="InterPro" id="IPR003961">
    <property type="entry name" value="FN3_dom"/>
</dbReference>
<dbReference type="InterPro" id="IPR036116">
    <property type="entry name" value="FN3_sf"/>
</dbReference>
<dbReference type="InterPro" id="IPR013783">
    <property type="entry name" value="Ig-like_fold"/>
</dbReference>
<dbReference type="InterPro" id="IPR001791">
    <property type="entry name" value="Laminin_G"/>
</dbReference>
<dbReference type="InterPro" id="IPR050372">
    <property type="entry name" value="Neurexin-related_CASP"/>
</dbReference>
<dbReference type="PANTHER" id="PTHR15036:SF88">
    <property type="entry name" value="PIKACHURIN"/>
    <property type="match status" value="1"/>
</dbReference>
<dbReference type="PANTHER" id="PTHR15036">
    <property type="entry name" value="PIKACHURIN-LIKE PROTEIN"/>
    <property type="match status" value="1"/>
</dbReference>
<dbReference type="Pfam" id="PF00008">
    <property type="entry name" value="EGF"/>
    <property type="match status" value="2"/>
</dbReference>
<dbReference type="Pfam" id="PF25016">
    <property type="entry name" value="EGF_Pikachurin"/>
    <property type="match status" value="1"/>
</dbReference>
<dbReference type="Pfam" id="PF00041">
    <property type="entry name" value="fn3"/>
    <property type="match status" value="2"/>
</dbReference>
<dbReference type="Pfam" id="PF00054">
    <property type="entry name" value="Laminin_G_1"/>
    <property type="match status" value="1"/>
</dbReference>
<dbReference type="Pfam" id="PF02210">
    <property type="entry name" value="Laminin_G_2"/>
    <property type="match status" value="2"/>
</dbReference>
<dbReference type="SMART" id="SM00181">
    <property type="entry name" value="EGF"/>
    <property type="match status" value="3"/>
</dbReference>
<dbReference type="SMART" id="SM00179">
    <property type="entry name" value="EGF_CA"/>
    <property type="match status" value="2"/>
</dbReference>
<dbReference type="SMART" id="SM00060">
    <property type="entry name" value="FN3"/>
    <property type="match status" value="2"/>
</dbReference>
<dbReference type="SMART" id="SM00282">
    <property type="entry name" value="LamG"/>
    <property type="match status" value="3"/>
</dbReference>
<dbReference type="SUPFAM" id="SSF49899">
    <property type="entry name" value="Concanavalin A-like lectins/glucanases"/>
    <property type="match status" value="3"/>
</dbReference>
<dbReference type="SUPFAM" id="SSF49265">
    <property type="entry name" value="Fibronectin type III"/>
    <property type="match status" value="1"/>
</dbReference>
<dbReference type="PROSITE" id="PS00022">
    <property type="entry name" value="EGF_1"/>
    <property type="match status" value="3"/>
</dbReference>
<dbReference type="PROSITE" id="PS01186">
    <property type="entry name" value="EGF_2"/>
    <property type="match status" value="2"/>
</dbReference>
<dbReference type="PROSITE" id="PS50026">
    <property type="entry name" value="EGF_3"/>
    <property type="match status" value="3"/>
</dbReference>
<dbReference type="PROSITE" id="PS50853">
    <property type="entry name" value="FN3"/>
    <property type="match status" value="2"/>
</dbReference>
<dbReference type="PROSITE" id="PS50025">
    <property type="entry name" value="LAM_G_DOMAIN"/>
    <property type="match status" value="3"/>
</dbReference>
<name>EGFLA_RAT</name>